<comment type="function">
    <text evidence="1">Multifunctional enzyme that catalyzes the SAM-dependent methylations of uroporphyrinogen III at position C-2 and C-7 to form precorrin-2 via precorrin-1. Then it catalyzes the NAD-dependent ring dehydrogenation of precorrin-2 to yield sirohydrochlorin. Finally, it catalyzes the ferrochelation of sirohydrochlorin to yield siroheme.</text>
</comment>
<comment type="catalytic activity">
    <reaction evidence="1">
        <text>uroporphyrinogen III + 2 S-adenosyl-L-methionine = precorrin-2 + 2 S-adenosyl-L-homocysteine + H(+)</text>
        <dbReference type="Rhea" id="RHEA:32459"/>
        <dbReference type="ChEBI" id="CHEBI:15378"/>
        <dbReference type="ChEBI" id="CHEBI:57308"/>
        <dbReference type="ChEBI" id="CHEBI:57856"/>
        <dbReference type="ChEBI" id="CHEBI:58827"/>
        <dbReference type="ChEBI" id="CHEBI:59789"/>
        <dbReference type="EC" id="2.1.1.107"/>
    </reaction>
</comment>
<comment type="catalytic activity">
    <reaction evidence="1">
        <text>precorrin-2 + NAD(+) = sirohydrochlorin + NADH + 2 H(+)</text>
        <dbReference type="Rhea" id="RHEA:15613"/>
        <dbReference type="ChEBI" id="CHEBI:15378"/>
        <dbReference type="ChEBI" id="CHEBI:57540"/>
        <dbReference type="ChEBI" id="CHEBI:57945"/>
        <dbReference type="ChEBI" id="CHEBI:58351"/>
        <dbReference type="ChEBI" id="CHEBI:58827"/>
        <dbReference type="EC" id="1.3.1.76"/>
    </reaction>
</comment>
<comment type="catalytic activity">
    <reaction evidence="1">
        <text>siroheme + 2 H(+) = sirohydrochlorin + Fe(2+)</text>
        <dbReference type="Rhea" id="RHEA:24360"/>
        <dbReference type="ChEBI" id="CHEBI:15378"/>
        <dbReference type="ChEBI" id="CHEBI:29033"/>
        <dbReference type="ChEBI" id="CHEBI:58351"/>
        <dbReference type="ChEBI" id="CHEBI:60052"/>
        <dbReference type="EC" id="4.99.1.4"/>
    </reaction>
</comment>
<comment type="pathway">
    <text evidence="1">Cofactor biosynthesis; adenosylcobalamin biosynthesis; precorrin-2 from uroporphyrinogen III: step 1/1.</text>
</comment>
<comment type="pathway">
    <text evidence="1">Cofactor biosynthesis; adenosylcobalamin biosynthesis; sirohydrochlorin from precorrin-2: step 1/1.</text>
</comment>
<comment type="pathway">
    <text evidence="1">Porphyrin-containing compound metabolism; siroheme biosynthesis; precorrin-2 from uroporphyrinogen III: step 1/1.</text>
</comment>
<comment type="pathway">
    <text evidence="1">Porphyrin-containing compound metabolism; siroheme biosynthesis; siroheme from sirohydrochlorin: step 1/1.</text>
</comment>
<comment type="pathway">
    <text evidence="1">Porphyrin-containing compound metabolism; siroheme biosynthesis; sirohydrochlorin from precorrin-2: step 1/1.</text>
</comment>
<comment type="similarity">
    <text evidence="1">In the N-terminal section; belongs to the precorrin-2 dehydrogenase / sirohydrochlorin ferrochelatase family.</text>
</comment>
<comment type="similarity">
    <text evidence="1">In the C-terminal section; belongs to the precorrin methyltransferase family.</text>
</comment>
<name>CYSG_BAUCH</name>
<gene>
    <name evidence="1" type="primary">cysG</name>
    <name type="ordered locus">BCI_0215</name>
</gene>
<evidence type="ECO:0000255" key="1">
    <source>
        <dbReference type="HAMAP-Rule" id="MF_01646"/>
    </source>
</evidence>
<reference key="1">
    <citation type="journal article" date="2006" name="PLoS Biol.">
        <title>Metabolic complementarity and genomics of the dual bacterial symbiosis of sharpshooters.</title>
        <authorList>
            <person name="Wu D."/>
            <person name="Daugherty S.C."/>
            <person name="Van Aken S.E."/>
            <person name="Pai G.H."/>
            <person name="Watkins K.L."/>
            <person name="Khouri H."/>
            <person name="Tallon L.J."/>
            <person name="Zaborsky J.M."/>
            <person name="Dunbar H.E."/>
            <person name="Tran P.L."/>
            <person name="Moran N.A."/>
            <person name="Eisen J.A."/>
        </authorList>
    </citation>
    <scope>NUCLEOTIDE SEQUENCE [LARGE SCALE GENOMIC DNA]</scope>
</reference>
<dbReference type="EC" id="2.1.1.107" evidence="1"/>
<dbReference type="EC" id="1.3.1.76" evidence="1"/>
<dbReference type="EC" id="4.99.1.4" evidence="1"/>
<dbReference type="EMBL" id="CP000238">
    <property type="protein sequence ID" value="ABF14343.1"/>
    <property type="molecule type" value="Genomic_DNA"/>
</dbReference>
<dbReference type="RefSeq" id="WP_011520403.1">
    <property type="nucleotide sequence ID" value="NC_007984.1"/>
</dbReference>
<dbReference type="SMR" id="Q1LTP4"/>
<dbReference type="STRING" id="374463.BCI_0215"/>
<dbReference type="KEGG" id="bci:BCI_0215"/>
<dbReference type="HOGENOM" id="CLU_011276_2_0_6"/>
<dbReference type="OrthoDB" id="9815856at2"/>
<dbReference type="UniPathway" id="UPA00148">
    <property type="reaction ID" value="UER00211"/>
</dbReference>
<dbReference type="UniPathway" id="UPA00148">
    <property type="reaction ID" value="UER00222"/>
</dbReference>
<dbReference type="UniPathway" id="UPA00262">
    <property type="reaction ID" value="UER00211"/>
</dbReference>
<dbReference type="UniPathway" id="UPA00262">
    <property type="reaction ID" value="UER00222"/>
</dbReference>
<dbReference type="UniPathway" id="UPA00262">
    <property type="reaction ID" value="UER00376"/>
</dbReference>
<dbReference type="Proteomes" id="UP000002427">
    <property type="component" value="Chromosome"/>
</dbReference>
<dbReference type="GO" id="GO:0051287">
    <property type="term" value="F:NAD binding"/>
    <property type="evidence" value="ECO:0007669"/>
    <property type="project" value="InterPro"/>
</dbReference>
<dbReference type="GO" id="GO:0043115">
    <property type="term" value="F:precorrin-2 dehydrogenase activity"/>
    <property type="evidence" value="ECO:0007669"/>
    <property type="project" value="UniProtKB-UniRule"/>
</dbReference>
<dbReference type="GO" id="GO:0051266">
    <property type="term" value="F:sirohydrochlorin ferrochelatase activity"/>
    <property type="evidence" value="ECO:0007669"/>
    <property type="project" value="UniProtKB-EC"/>
</dbReference>
<dbReference type="GO" id="GO:0004851">
    <property type="term" value="F:uroporphyrin-III C-methyltransferase activity"/>
    <property type="evidence" value="ECO:0007669"/>
    <property type="project" value="UniProtKB-UniRule"/>
</dbReference>
<dbReference type="GO" id="GO:0009236">
    <property type="term" value="P:cobalamin biosynthetic process"/>
    <property type="evidence" value="ECO:0007669"/>
    <property type="project" value="UniProtKB-UniRule"/>
</dbReference>
<dbReference type="GO" id="GO:0032259">
    <property type="term" value="P:methylation"/>
    <property type="evidence" value="ECO:0007669"/>
    <property type="project" value="UniProtKB-KW"/>
</dbReference>
<dbReference type="GO" id="GO:0019354">
    <property type="term" value="P:siroheme biosynthetic process"/>
    <property type="evidence" value="ECO:0007669"/>
    <property type="project" value="UniProtKB-UniRule"/>
</dbReference>
<dbReference type="CDD" id="cd11642">
    <property type="entry name" value="SUMT"/>
    <property type="match status" value="1"/>
</dbReference>
<dbReference type="FunFam" id="3.30.160.110:FF:000001">
    <property type="entry name" value="Siroheme synthase"/>
    <property type="match status" value="1"/>
</dbReference>
<dbReference type="FunFam" id="3.30.950.10:FF:000001">
    <property type="entry name" value="Siroheme synthase"/>
    <property type="match status" value="1"/>
</dbReference>
<dbReference type="FunFam" id="3.40.1010.10:FF:000001">
    <property type="entry name" value="Siroheme synthase"/>
    <property type="match status" value="1"/>
</dbReference>
<dbReference type="Gene3D" id="3.40.1010.10">
    <property type="entry name" value="Cobalt-precorrin-4 Transmethylase, Domain 1"/>
    <property type="match status" value="1"/>
</dbReference>
<dbReference type="Gene3D" id="3.30.950.10">
    <property type="entry name" value="Methyltransferase, Cobalt-precorrin-4 Transmethylase, Domain 2"/>
    <property type="match status" value="1"/>
</dbReference>
<dbReference type="Gene3D" id="3.40.50.720">
    <property type="entry name" value="NAD(P)-binding Rossmann-like Domain"/>
    <property type="match status" value="1"/>
</dbReference>
<dbReference type="Gene3D" id="1.10.8.210">
    <property type="entry name" value="Sirohaem synthase, dimerisation domain"/>
    <property type="match status" value="1"/>
</dbReference>
<dbReference type="Gene3D" id="3.30.160.110">
    <property type="entry name" value="Siroheme synthase, domain 2"/>
    <property type="match status" value="1"/>
</dbReference>
<dbReference type="HAMAP" id="MF_01646">
    <property type="entry name" value="Siroheme_synth"/>
    <property type="match status" value="1"/>
</dbReference>
<dbReference type="InterPro" id="IPR000878">
    <property type="entry name" value="4pyrrol_Mease"/>
</dbReference>
<dbReference type="InterPro" id="IPR035996">
    <property type="entry name" value="4pyrrol_Methylase_sf"/>
</dbReference>
<dbReference type="InterPro" id="IPR014777">
    <property type="entry name" value="4pyrrole_Mease_sub1"/>
</dbReference>
<dbReference type="InterPro" id="IPR014776">
    <property type="entry name" value="4pyrrole_Mease_sub2"/>
</dbReference>
<dbReference type="InterPro" id="IPR006366">
    <property type="entry name" value="CobA/CysG_C"/>
</dbReference>
<dbReference type="InterPro" id="IPR036291">
    <property type="entry name" value="NAD(P)-bd_dom_sf"/>
</dbReference>
<dbReference type="InterPro" id="IPR050161">
    <property type="entry name" value="Siro_Cobalamin_biosynth"/>
</dbReference>
<dbReference type="InterPro" id="IPR037115">
    <property type="entry name" value="Sirohaem_synt_dimer_dom_sf"/>
</dbReference>
<dbReference type="InterPro" id="IPR012409">
    <property type="entry name" value="Sirohaem_synth"/>
</dbReference>
<dbReference type="InterPro" id="IPR028281">
    <property type="entry name" value="Sirohaem_synthase_central"/>
</dbReference>
<dbReference type="InterPro" id="IPR019478">
    <property type="entry name" value="Sirohaem_synthase_dimer_dom"/>
</dbReference>
<dbReference type="InterPro" id="IPR006367">
    <property type="entry name" value="Sirohaem_synthase_N"/>
</dbReference>
<dbReference type="InterPro" id="IPR003043">
    <property type="entry name" value="Uropor_MeTrfase_CS"/>
</dbReference>
<dbReference type="NCBIfam" id="TIGR01469">
    <property type="entry name" value="cobA_cysG_Cterm"/>
    <property type="match status" value="1"/>
</dbReference>
<dbReference type="NCBIfam" id="TIGR01470">
    <property type="entry name" value="cysG_Nterm"/>
    <property type="match status" value="1"/>
</dbReference>
<dbReference type="NCBIfam" id="NF004790">
    <property type="entry name" value="PRK06136.1"/>
    <property type="match status" value="1"/>
</dbReference>
<dbReference type="NCBIfam" id="NF007922">
    <property type="entry name" value="PRK10637.1"/>
    <property type="match status" value="1"/>
</dbReference>
<dbReference type="PANTHER" id="PTHR45790:SF1">
    <property type="entry name" value="SIROHEME SYNTHASE"/>
    <property type="match status" value="1"/>
</dbReference>
<dbReference type="PANTHER" id="PTHR45790">
    <property type="entry name" value="SIROHEME SYNTHASE-RELATED"/>
    <property type="match status" value="1"/>
</dbReference>
<dbReference type="Pfam" id="PF10414">
    <property type="entry name" value="CysG_dimeriser"/>
    <property type="match status" value="1"/>
</dbReference>
<dbReference type="Pfam" id="PF13241">
    <property type="entry name" value="NAD_binding_7"/>
    <property type="match status" value="1"/>
</dbReference>
<dbReference type="Pfam" id="PF14824">
    <property type="entry name" value="Sirohm_synth_M"/>
    <property type="match status" value="1"/>
</dbReference>
<dbReference type="Pfam" id="PF00590">
    <property type="entry name" value="TP_methylase"/>
    <property type="match status" value="1"/>
</dbReference>
<dbReference type="PIRSF" id="PIRSF036426">
    <property type="entry name" value="Sirohaem_synth"/>
    <property type="match status" value="1"/>
</dbReference>
<dbReference type="SUPFAM" id="SSF51735">
    <property type="entry name" value="NAD(P)-binding Rossmann-fold domains"/>
    <property type="match status" value="1"/>
</dbReference>
<dbReference type="SUPFAM" id="SSF75615">
    <property type="entry name" value="Siroheme synthase middle domains-like"/>
    <property type="match status" value="1"/>
</dbReference>
<dbReference type="SUPFAM" id="SSF53790">
    <property type="entry name" value="Tetrapyrrole methylase"/>
    <property type="match status" value="1"/>
</dbReference>
<dbReference type="PROSITE" id="PS00839">
    <property type="entry name" value="SUMT_1"/>
    <property type="match status" value="1"/>
</dbReference>
<dbReference type="PROSITE" id="PS00840">
    <property type="entry name" value="SUMT_2"/>
    <property type="match status" value="1"/>
</dbReference>
<sequence length="462" mass="51049">MEYLPLFANLRQRTVLVVGGGNVAARKIQLLMRTGAHIKVVADDLCPELARIVNKKDINWIGKLFEPAMLDEVFLVIAATNNTKLNALVYKCAEKRHIFANIVDKQSYCSFIFPSIVDRSPIVVAISSSGKAPVLARILREKIETILPMFIGPMATLVGTWRNRIKQHIHNIAWRRRFWETILNGRFAHLISQGKWEHAEKEIESQLYHYQSPIGNVALVGAGPGDSGLLTLRGLQLMQQADIVLYDYLVSPEILDLVRRDADRIYVGKQAGKHSMPQAEINSLLVKLALQGKNVVRLKGGDPFIFGRGGEELQAVAAAGISFQVVPGITAASGATAYAGIPLTHREYAHSVIFITGHQCDDSSNYLNWSLLARSNQTLVIYMGVIQAAVIKKKLLAHGRALQTPVAVISRGTLKDQSVIIGTLEQLEMLTIQALSPTLLIIGEVVKISCEINWFGKIIKEQ</sequence>
<organism>
    <name type="scientific">Baumannia cicadellinicola subsp. Homalodisca coagulata</name>
    <dbReference type="NCBI Taxonomy" id="374463"/>
    <lineage>
        <taxon>Bacteria</taxon>
        <taxon>Pseudomonadati</taxon>
        <taxon>Pseudomonadota</taxon>
        <taxon>Gammaproteobacteria</taxon>
        <taxon>Candidatus Palibaumannia</taxon>
    </lineage>
</organism>
<keyword id="KW-0169">Cobalamin biosynthesis</keyword>
<keyword id="KW-0456">Lyase</keyword>
<keyword id="KW-0489">Methyltransferase</keyword>
<keyword id="KW-0511">Multifunctional enzyme</keyword>
<keyword id="KW-0520">NAD</keyword>
<keyword id="KW-0560">Oxidoreductase</keyword>
<keyword id="KW-0597">Phosphoprotein</keyword>
<keyword id="KW-0627">Porphyrin biosynthesis</keyword>
<keyword id="KW-1185">Reference proteome</keyword>
<keyword id="KW-0949">S-adenosyl-L-methionine</keyword>
<keyword id="KW-0808">Transferase</keyword>
<proteinExistence type="inferred from homology"/>
<feature type="chain" id="PRO_0000330493" description="Siroheme synthase">
    <location>
        <begin position="1"/>
        <end position="462"/>
    </location>
</feature>
<feature type="region of interest" description="Precorrin-2 dehydrogenase /sirohydrochlorin ferrochelatase" evidence="1">
    <location>
        <begin position="1"/>
        <end position="203"/>
    </location>
</feature>
<feature type="region of interest" description="Uroporphyrinogen-III C-methyltransferase" evidence="1">
    <location>
        <begin position="215"/>
        <end position="462"/>
    </location>
</feature>
<feature type="active site" description="Proton acceptor" evidence="1">
    <location>
        <position position="247"/>
    </location>
</feature>
<feature type="active site" description="Proton donor" evidence="1">
    <location>
        <position position="269"/>
    </location>
</feature>
<feature type="binding site" evidence="1">
    <location>
        <begin position="22"/>
        <end position="23"/>
    </location>
    <ligand>
        <name>NAD(+)</name>
        <dbReference type="ChEBI" id="CHEBI:57540"/>
    </ligand>
</feature>
<feature type="binding site" evidence="1">
    <location>
        <begin position="43"/>
        <end position="44"/>
    </location>
    <ligand>
        <name>NAD(+)</name>
        <dbReference type="ChEBI" id="CHEBI:57540"/>
    </ligand>
</feature>
<feature type="binding site" evidence="1">
    <location>
        <position position="224"/>
    </location>
    <ligand>
        <name>S-adenosyl-L-methionine</name>
        <dbReference type="ChEBI" id="CHEBI:59789"/>
    </ligand>
</feature>
<feature type="binding site" evidence="1">
    <location>
        <begin position="300"/>
        <end position="302"/>
    </location>
    <ligand>
        <name>S-adenosyl-L-methionine</name>
        <dbReference type="ChEBI" id="CHEBI:59789"/>
    </ligand>
</feature>
<feature type="binding site" evidence="1">
    <location>
        <position position="305"/>
    </location>
    <ligand>
        <name>S-adenosyl-L-methionine</name>
        <dbReference type="ChEBI" id="CHEBI:59789"/>
    </ligand>
</feature>
<feature type="binding site" evidence="1">
    <location>
        <begin position="330"/>
        <end position="331"/>
    </location>
    <ligand>
        <name>S-adenosyl-L-methionine</name>
        <dbReference type="ChEBI" id="CHEBI:59789"/>
    </ligand>
</feature>
<feature type="binding site" evidence="1">
    <location>
        <position position="383"/>
    </location>
    <ligand>
        <name>S-adenosyl-L-methionine</name>
        <dbReference type="ChEBI" id="CHEBI:59789"/>
    </ligand>
</feature>
<feature type="binding site" evidence="1">
    <location>
        <position position="412"/>
    </location>
    <ligand>
        <name>S-adenosyl-L-methionine</name>
        <dbReference type="ChEBI" id="CHEBI:59789"/>
    </ligand>
</feature>
<feature type="modified residue" description="Phosphoserine" evidence="1">
    <location>
        <position position="128"/>
    </location>
</feature>
<accession>Q1LTP4</accession>
<protein>
    <recommendedName>
        <fullName evidence="1">Siroheme synthase</fullName>
    </recommendedName>
    <domain>
        <recommendedName>
            <fullName evidence="1">Uroporphyrinogen-III C-methyltransferase</fullName>
            <shortName evidence="1">Urogen III methylase</shortName>
            <ecNumber evidence="1">2.1.1.107</ecNumber>
        </recommendedName>
        <alternativeName>
            <fullName evidence="1">SUMT</fullName>
        </alternativeName>
        <alternativeName>
            <fullName evidence="1">Uroporphyrinogen III methylase</fullName>
            <shortName evidence="1">UROM</shortName>
        </alternativeName>
    </domain>
    <domain>
        <recommendedName>
            <fullName evidence="1">Precorrin-2 dehydrogenase</fullName>
            <ecNumber evidence="1">1.3.1.76</ecNumber>
        </recommendedName>
    </domain>
    <domain>
        <recommendedName>
            <fullName evidence="1">Sirohydrochlorin ferrochelatase</fullName>
            <ecNumber evidence="1">4.99.1.4</ecNumber>
        </recommendedName>
    </domain>
</protein>